<accession>Q6LKQ1</accession>
<feature type="chain" id="PRO_0000225835" description="UPF0145 protein PBPRB0184">
    <location>
        <begin position="1"/>
        <end position="103"/>
    </location>
</feature>
<name>Y4184_PHOPR</name>
<keyword id="KW-1185">Reference proteome</keyword>
<protein>
    <recommendedName>
        <fullName evidence="1">UPF0145 protein PBPRB0184</fullName>
    </recommendedName>
</protein>
<organism>
    <name type="scientific">Photobacterium profundum (strain SS9)</name>
    <dbReference type="NCBI Taxonomy" id="298386"/>
    <lineage>
        <taxon>Bacteria</taxon>
        <taxon>Pseudomonadati</taxon>
        <taxon>Pseudomonadota</taxon>
        <taxon>Gammaproteobacteria</taxon>
        <taxon>Vibrionales</taxon>
        <taxon>Vibrionaceae</taxon>
        <taxon>Photobacterium</taxon>
    </lineage>
</organism>
<evidence type="ECO:0000255" key="1">
    <source>
        <dbReference type="HAMAP-Rule" id="MF_00338"/>
    </source>
</evidence>
<dbReference type="EMBL" id="CR378675">
    <property type="protein sequence ID" value="CAG22057.1"/>
    <property type="molecule type" value="Genomic_DNA"/>
</dbReference>
<dbReference type="RefSeq" id="WP_011220280.1">
    <property type="nucleotide sequence ID" value="NC_006371.1"/>
</dbReference>
<dbReference type="SMR" id="Q6LKQ1"/>
<dbReference type="STRING" id="298386.PBPRB0184"/>
<dbReference type="KEGG" id="ppr:PBPRB0184"/>
<dbReference type="eggNOG" id="COG0393">
    <property type="taxonomic scope" value="Bacteria"/>
</dbReference>
<dbReference type="HOGENOM" id="CLU_117144_1_2_6"/>
<dbReference type="Proteomes" id="UP000000593">
    <property type="component" value="Chromosome 2"/>
</dbReference>
<dbReference type="Gene3D" id="3.30.110.70">
    <property type="entry name" value="Hypothetical protein apc22750. Chain B"/>
    <property type="match status" value="1"/>
</dbReference>
<dbReference type="HAMAP" id="MF_00338">
    <property type="entry name" value="UPF0145"/>
    <property type="match status" value="1"/>
</dbReference>
<dbReference type="InterPro" id="IPR035439">
    <property type="entry name" value="UPF0145_dom_sf"/>
</dbReference>
<dbReference type="InterPro" id="IPR002765">
    <property type="entry name" value="UPF0145_YbjQ-like"/>
</dbReference>
<dbReference type="PANTHER" id="PTHR34068:SF2">
    <property type="entry name" value="UPF0145 PROTEIN SCO3412"/>
    <property type="match status" value="1"/>
</dbReference>
<dbReference type="PANTHER" id="PTHR34068">
    <property type="entry name" value="UPF0145 PROTEIN YBJQ"/>
    <property type="match status" value="1"/>
</dbReference>
<dbReference type="Pfam" id="PF01906">
    <property type="entry name" value="YbjQ_1"/>
    <property type="match status" value="1"/>
</dbReference>
<dbReference type="SUPFAM" id="SSF117782">
    <property type="entry name" value="YbjQ-like"/>
    <property type="match status" value="1"/>
</dbReference>
<proteinExistence type="inferred from homology"/>
<gene>
    <name type="ordered locus">PBPRB0184</name>
</gene>
<comment type="similarity">
    <text evidence="1">Belongs to the UPF0145 family.</text>
</comment>
<sequence>MLCVTTSDIIGREITETLGVVTGNVVQSKHVGRDIMAGFKTIFGGEIRGYTEMLTEAREEALNRAIADAQSQGADAIVNLRFTTSAIMQGASEILAYGTAVKL</sequence>
<reference key="1">
    <citation type="journal article" date="2005" name="Science">
        <title>Life at depth: Photobacterium profundum genome sequence and expression analysis.</title>
        <authorList>
            <person name="Vezzi A."/>
            <person name="Campanaro S."/>
            <person name="D'Angelo M."/>
            <person name="Simonato F."/>
            <person name="Vitulo N."/>
            <person name="Lauro F.M."/>
            <person name="Cestaro A."/>
            <person name="Malacrida G."/>
            <person name="Simionati B."/>
            <person name="Cannata N."/>
            <person name="Romualdi C."/>
            <person name="Bartlett D.H."/>
            <person name="Valle G."/>
        </authorList>
    </citation>
    <scope>NUCLEOTIDE SEQUENCE [LARGE SCALE GENOMIC DNA]</scope>
    <source>
        <strain>ATCC BAA-1253 / SS9</strain>
    </source>
</reference>